<sequence length="420" mass="47123">MNTSFTRKSHTFLPKLFFRKMSSSGAKEKPELQFPFLQDEDTVATLHECKTLFILRGLPGSGKSTLARLILEKYHDGTKMVSADAYKIIPGSRADFSEAYKRLDEDLAGYCRRDIRVLVLDDTNHERERLDQLFEMADQYQYQVVLVEPKTAWRLDCAQLKEKNQWQLSADDLKKLKPGLEKDFLPLYFGWFLTKKSSETLRKAGQVFLEELGNHKAFKKELRHFISGDEPKEKLELVSYFGKRPPGVLHCTTKFCDYGKAAGAEEYAQQEVVKRSYGKAFKLSISALFVTPKTAGAQVVLTDQELQLWPSDLDKPSASEGLPPGSRAHVTLGCAADVQPVQTGLDLLDILQQVKGGSQGEAVGELPRGKLYSLGKGRWMLSLTKKMEVKAIFTGYYGKGKPVPIHGSRKGGAMQICTII</sequence>
<comment type="function">
    <text evidence="1 5">Catalyzes the formation of 2'-nucleotide products from 2',3'-cyclic substrates (By similarity). May participate in RNA metabolism in the myelinating cell, CNP is the third most abundant protein in central nervous system myelin (PubMed:22393399).</text>
</comment>
<comment type="catalytic activity">
    <reaction evidence="1">
        <text>a nucleoside 2',3'-cyclic phosphate + H2O = a nucleoside 2'-phosphate + H(+)</text>
        <dbReference type="Rhea" id="RHEA:14489"/>
        <dbReference type="ChEBI" id="CHEBI:15377"/>
        <dbReference type="ChEBI" id="CHEBI:15378"/>
        <dbReference type="ChEBI" id="CHEBI:66954"/>
        <dbReference type="ChEBI" id="CHEBI:78552"/>
        <dbReference type="EC" id="3.1.4.37"/>
    </reaction>
</comment>
<comment type="subunit">
    <text evidence="5">Exists as monomers and homodimers.</text>
</comment>
<comment type="subcellular location">
    <subcellularLocation>
        <location evidence="4">Membrane</location>
        <topology evidence="4">Lipid-anchor</topology>
    </subcellularLocation>
    <subcellularLocation>
        <location evidence="2">Melanosome</location>
    </subcellularLocation>
    <text>Firmly bound to membrane structures of brain white matter.</text>
</comment>
<comment type="alternative products">
    <event type="alternative splicing"/>
    <isoform>
        <id>P16330-1</id>
        <name>CNPII</name>
        <name>DNAII</name>
        <sequence type="displayed"/>
    </isoform>
    <isoform>
        <id>P16330-2</id>
        <name>CNPI</name>
        <name>DNAI</name>
        <sequence type="described" ref="VSP_004172"/>
    </isoform>
</comment>
<comment type="similarity">
    <text evidence="8">Belongs to the 2H phosphoesterase superfamily. CNPase family.</text>
</comment>
<feature type="chain" id="PRO_0000089962" description="2',3'-cyclic-nucleotide 3'-phosphodiesterase">
    <location>
        <begin position="1"/>
        <end position="417"/>
    </location>
</feature>
<feature type="propeptide" id="PRO_0000422297" description="Removed in mature form" evidence="8">
    <location>
        <begin position="418"/>
        <end position="420"/>
    </location>
</feature>
<feature type="active site" description="Proton acceptor" evidence="5">
    <location>
        <position position="250"/>
    </location>
</feature>
<feature type="active site" description="Proton donor" evidence="5">
    <location>
        <position position="329"/>
    </location>
</feature>
<feature type="binding site">
    <location>
        <position position="252"/>
    </location>
    <ligand>
        <name>substrate</name>
    </ligand>
</feature>
<feature type="binding site">
    <location>
        <position position="331"/>
    </location>
    <ligand>
        <name>substrate</name>
    </ligand>
</feature>
<feature type="modified residue" description="Phosphoserine" evidence="2">
    <location>
        <position position="9"/>
    </location>
</feature>
<feature type="modified residue" description="Phosphotyrosine" evidence="11">
    <location>
        <position position="110"/>
    </location>
</feature>
<feature type="modified residue" description="Phosphoserine" evidence="12">
    <location>
        <position position="169"/>
    </location>
</feature>
<feature type="modified residue" description="Phosphoserine" evidence="3">
    <location>
        <position position="227"/>
    </location>
</feature>
<feature type="modified residue" description="Phosphoserine" evidence="3">
    <location>
        <position position="239"/>
    </location>
</feature>
<feature type="modified residue" description="Phosphoserine" evidence="3">
    <location>
        <position position="358"/>
    </location>
</feature>
<feature type="modified residue" description="Cysteine methyl ester" evidence="8">
    <location>
        <position position="417"/>
    </location>
</feature>
<feature type="lipid moiety-binding region" description="S-farnesyl cysteine" evidence="9">
    <location>
        <position position="417"/>
    </location>
</feature>
<feature type="splice variant" id="VSP_004172" description="In isoform CNPI." evidence="6 7">
    <location>
        <begin position="1"/>
        <end position="20"/>
    </location>
</feature>
<feature type="sequence conflict" description="In Ref. 1; BAA07621/BAA07622." evidence="8" ref="1">
    <original>I</original>
    <variation>M</variation>
    <location>
        <position position="115"/>
    </location>
</feature>
<feature type="sequence conflict" description="In Ref. 1; BAA07621/BAA07622." evidence="8" ref="1">
    <original>M</original>
    <variation>L</variation>
    <location>
        <position position="136"/>
    </location>
</feature>
<feature type="helix" evidence="16">
    <location>
        <begin position="182"/>
        <end position="184"/>
    </location>
</feature>
<feature type="strand" evidence="15">
    <location>
        <begin position="187"/>
        <end position="193"/>
    </location>
</feature>
<feature type="helix" evidence="15">
    <location>
        <begin position="195"/>
        <end position="214"/>
    </location>
</feature>
<feature type="helix" evidence="15">
    <location>
        <begin position="216"/>
        <end position="220"/>
    </location>
</feature>
<feature type="helix" evidence="15">
    <location>
        <begin position="221"/>
        <end position="224"/>
    </location>
</feature>
<feature type="helix" evidence="15">
    <location>
        <begin position="237"/>
        <end position="240"/>
    </location>
</feature>
<feature type="strand" evidence="15">
    <location>
        <begin position="246"/>
        <end position="248"/>
    </location>
</feature>
<feature type="strand" evidence="15">
    <location>
        <begin position="250"/>
        <end position="255"/>
    </location>
</feature>
<feature type="helix" evidence="15">
    <location>
        <begin position="257"/>
        <end position="259"/>
    </location>
</feature>
<feature type="helix" evidence="15">
    <location>
        <begin position="264"/>
        <end position="269"/>
    </location>
</feature>
<feature type="helix" evidence="15">
    <location>
        <begin position="271"/>
        <end position="276"/>
    </location>
</feature>
<feature type="strand" evidence="15">
    <location>
        <begin position="280"/>
        <end position="290"/>
    </location>
</feature>
<feature type="strand" evidence="15">
    <location>
        <begin position="292"/>
        <end position="300"/>
    </location>
</feature>
<feature type="helix" evidence="15">
    <location>
        <begin position="303"/>
        <end position="306"/>
    </location>
</feature>
<feature type="helix" evidence="15">
    <location>
        <begin position="317"/>
        <end position="319"/>
    </location>
</feature>
<feature type="strand" evidence="13">
    <location>
        <begin position="320"/>
        <end position="322"/>
    </location>
</feature>
<feature type="turn" evidence="15">
    <location>
        <begin position="324"/>
        <end position="327"/>
    </location>
</feature>
<feature type="strand" evidence="15">
    <location>
        <begin position="329"/>
        <end position="334"/>
    </location>
</feature>
<feature type="helix" evidence="15">
    <location>
        <begin position="342"/>
        <end position="354"/>
    </location>
</feature>
<feature type="turn" evidence="14">
    <location>
        <begin position="356"/>
        <end position="359"/>
    </location>
</feature>
<feature type="strand" evidence="15">
    <location>
        <begin position="364"/>
        <end position="366"/>
    </location>
</feature>
<feature type="strand" evidence="15">
    <location>
        <begin position="369"/>
        <end position="375"/>
    </location>
</feature>
<feature type="strand" evidence="15">
    <location>
        <begin position="378"/>
        <end position="396"/>
    </location>
</feature>
<protein>
    <recommendedName>
        <fullName evidence="8">2',3'-cyclic-nucleotide 3'-phosphodiesterase</fullName>
        <shortName>CNP</shortName>
        <shortName>CNPase</shortName>
        <ecNumber evidence="1">3.1.4.37</ecNumber>
    </recommendedName>
</protein>
<organism>
    <name type="scientific">Mus musculus</name>
    <name type="common">Mouse</name>
    <dbReference type="NCBI Taxonomy" id="10090"/>
    <lineage>
        <taxon>Eukaryota</taxon>
        <taxon>Metazoa</taxon>
        <taxon>Chordata</taxon>
        <taxon>Craniata</taxon>
        <taxon>Vertebrata</taxon>
        <taxon>Euteleostomi</taxon>
        <taxon>Mammalia</taxon>
        <taxon>Eutheria</taxon>
        <taxon>Euarchontoglires</taxon>
        <taxon>Glires</taxon>
        <taxon>Rodentia</taxon>
        <taxon>Myomorpha</taxon>
        <taxon>Muroidea</taxon>
        <taxon>Muridae</taxon>
        <taxon>Murinae</taxon>
        <taxon>Mus</taxon>
        <taxon>Mus</taxon>
    </lineage>
</organism>
<name>CN37_MOUSE</name>
<proteinExistence type="evidence at protein level"/>
<evidence type="ECO:0000250" key="1">
    <source>
        <dbReference type="UniProtKB" id="P06623"/>
    </source>
</evidence>
<evidence type="ECO:0000250" key="2">
    <source>
        <dbReference type="UniProtKB" id="P09543"/>
    </source>
</evidence>
<evidence type="ECO:0000250" key="3">
    <source>
        <dbReference type="UniProtKB" id="P13233"/>
    </source>
</evidence>
<evidence type="ECO:0000269" key="4">
    <source>
    </source>
</evidence>
<evidence type="ECO:0000269" key="5">
    <source>
    </source>
</evidence>
<evidence type="ECO:0000303" key="6">
    <source>
    </source>
</evidence>
<evidence type="ECO:0000303" key="7">
    <source>
    </source>
</evidence>
<evidence type="ECO:0000305" key="8"/>
<evidence type="ECO:0000305" key="9">
    <source>
    </source>
</evidence>
<evidence type="ECO:0000312" key="10">
    <source>
        <dbReference type="MGI" id="MGI:88437"/>
    </source>
</evidence>
<evidence type="ECO:0007744" key="11">
    <source>
    </source>
</evidence>
<evidence type="ECO:0007744" key="12">
    <source>
    </source>
</evidence>
<evidence type="ECO:0007829" key="13">
    <source>
        <dbReference type="PDB" id="2YPH"/>
    </source>
</evidence>
<evidence type="ECO:0007829" key="14">
    <source>
        <dbReference type="PDB" id="4WDB"/>
    </source>
</evidence>
<evidence type="ECO:0007829" key="15">
    <source>
        <dbReference type="PDB" id="5AE0"/>
    </source>
</evidence>
<evidence type="ECO:0007829" key="16">
    <source>
        <dbReference type="PDB" id="7QZS"/>
    </source>
</evidence>
<dbReference type="EC" id="3.1.4.37" evidence="1"/>
<dbReference type="EMBL" id="D38642">
    <property type="protein sequence ID" value="BAA07621.1"/>
    <property type="molecule type" value="Genomic_DNA"/>
</dbReference>
<dbReference type="EMBL" id="D38642">
    <property type="protein sequence ID" value="BAA07622.1"/>
    <property type="molecule type" value="Genomic_DNA"/>
</dbReference>
<dbReference type="EMBL" id="M31810">
    <property type="protein sequence ID" value="AAA37429.1"/>
    <property type="molecule type" value="mRNA"/>
</dbReference>
<dbReference type="EMBL" id="M58045">
    <property type="protein sequence ID" value="AAA37430.1"/>
    <property type="molecule type" value="mRNA"/>
</dbReference>
<dbReference type="EMBL" id="M58047">
    <property type="protein sequence ID" value="AAA37431.1"/>
    <property type="molecule type" value="Genomic_DNA"/>
</dbReference>
<dbReference type="EMBL" id="M58046">
    <property type="protein sequence ID" value="AAA37431.1"/>
    <property type="status" value="JOINED"/>
    <property type="molecule type" value="Genomic_DNA"/>
</dbReference>
<dbReference type="EMBL" id="AF332055">
    <property type="protein sequence ID" value="AAK56084.1"/>
    <property type="molecule type" value="mRNA"/>
</dbReference>
<dbReference type="EMBL" id="AF332056">
    <property type="protein sequence ID" value="AAK56085.1"/>
    <property type="molecule type" value="mRNA"/>
</dbReference>
<dbReference type="EMBL" id="BC005544">
    <property type="protein sequence ID" value="AAH05544.1"/>
    <property type="molecule type" value="mRNA"/>
</dbReference>
<dbReference type="EMBL" id="BC021904">
    <property type="protein sequence ID" value="AAH21904.1"/>
    <property type="molecule type" value="mRNA"/>
</dbReference>
<dbReference type="EMBL" id="AK050628">
    <property type="protein sequence ID" value="BAC34351.1"/>
    <property type="molecule type" value="mRNA"/>
</dbReference>
<dbReference type="CCDS" id="CCDS25427.1">
    <molecule id="P16330-1"/>
</dbReference>
<dbReference type="PIR" id="A35708">
    <property type="entry name" value="ESMS32"/>
</dbReference>
<dbReference type="RefSeq" id="NP_001139790.1">
    <molecule id="P16330-2"/>
    <property type="nucleotide sequence ID" value="NM_001146318.1"/>
</dbReference>
<dbReference type="RefSeq" id="NP_034053.2">
    <molecule id="P16330-1"/>
    <property type="nucleotide sequence ID" value="NM_009923.2"/>
</dbReference>
<dbReference type="RefSeq" id="XP_017169734.1">
    <property type="nucleotide sequence ID" value="XM_017314245.1"/>
</dbReference>
<dbReference type="PDB" id="2XMI">
    <property type="method" value="X-ray"/>
    <property type="resolution" value="1.74 A"/>
    <property type="chains" value="A=179-398"/>
</dbReference>
<dbReference type="PDB" id="2Y1P">
    <property type="method" value="X-ray"/>
    <property type="resolution" value="1.82 A"/>
    <property type="chains" value="A=179-398"/>
</dbReference>
<dbReference type="PDB" id="2Y3X">
    <property type="method" value="X-ray"/>
    <property type="resolution" value="2.10 A"/>
    <property type="chains" value="A/B/E=179-398"/>
</dbReference>
<dbReference type="PDB" id="2YDB">
    <property type="method" value="X-ray"/>
    <property type="resolution" value="2.15 A"/>
    <property type="chains" value="A=179-398"/>
</dbReference>
<dbReference type="PDB" id="2YDC">
    <property type="method" value="X-ray"/>
    <property type="resolution" value="2.05 A"/>
    <property type="chains" value="A=179-398"/>
</dbReference>
<dbReference type="PDB" id="2YDD">
    <property type="method" value="X-ray"/>
    <property type="resolution" value="2.40 A"/>
    <property type="chains" value="A=179-398"/>
</dbReference>
<dbReference type="PDB" id="2YOZ">
    <property type="method" value="X-ray"/>
    <property type="resolution" value="2.10 A"/>
    <property type="chains" value="A=179-398"/>
</dbReference>
<dbReference type="PDB" id="2YP0">
    <property type="method" value="X-ray"/>
    <property type="resolution" value="2.30 A"/>
    <property type="chains" value="A=179-398"/>
</dbReference>
<dbReference type="PDB" id="2YPC">
    <property type="method" value="X-ray"/>
    <property type="resolution" value="1.89 A"/>
    <property type="chains" value="A=179-398"/>
</dbReference>
<dbReference type="PDB" id="2YPE">
    <property type="method" value="X-ray"/>
    <property type="resolution" value="1.90 A"/>
    <property type="chains" value="A=179-398"/>
</dbReference>
<dbReference type="PDB" id="2YPH">
    <property type="method" value="X-ray"/>
    <property type="resolution" value="2.10 A"/>
    <property type="chains" value="A=179-398"/>
</dbReference>
<dbReference type="PDB" id="2YQ9">
    <property type="method" value="X-ray"/>
    <property type="resolution" value="1.90 A"/>
    <property type="chains" value="A=179-398"/>
</dbReference>
<dbReference type="PDB" id="3ZBR">
    <property type="method" value="X-ray"/>
    <property type="resolution" value="2.30 A"/>
    <property type="chains" value="A/B=179-398"/>
</dbReference>
<dbReference type="PDB" id="3ZBS">
    <property type="method" value="X-ray"/>
    <property type="resolution" value="2.45 A"/>
    <property type="chains" value="A=179-398"/>
</dbReference>
<dbReference type="PDB" id="3ZBZ">
    <property type="method" value="X-ray"/>
    <property type="resolution" value="2.10 A"/>
    <property type="chains" value="A=179-398"/>
</dbReference>
<dbReference type="PDB" id="4WBI">
    <property type="method" value="X-ray"/>
    <property type="resolution" value="2.00 A"/>
    <property type="chains" value="A=179-398"/>
</dbReference>
<dbReference type="PDB" id="4WBL">
    <property type="method" value="X-ray"/>
    <property type="resolution" value="2.50 A"/>
    <property type="chains" value="A=179-398"/>
</dbReference>
<dbReference type="PDB" id="4WC9">
    <property type="method" value="X-ray"/>
    <property type="resolution" value="2.00 A"/>
    <property type="chains" value="A=179-398"/>
</dbReference>
<dbReference type="PDB" id="4WCA">
    <property type="method" value="X-ray"/>
    <property type="resolution" value="1.85 A"/>
    <property type="chains" value="A=179-398"/>
</dbReference>
<dbReference type="PDB" id="4WCB">
    <property type="method" value="X-ray"/>
    <property type="resolution" value="1.57 A"/>
    <property type="chains" value="A=179-398"/>
</dbReference>
<dbReference type="PDB" id="4WCC">
    <property type="method" value="X-ray"/>
    <property type="resolution" value="2.70 A"/>
    <property type="chains" value="A=179-398"/>
</dbReference>
<dbReference type="PDB" id="4WDA">
    <property type="method" value="X-ray"/>
    <property type="resolution" value="1.85 A"/>
    <property type="chains" value="A=179-398"/>
</dbReference>
<dbReference type="PDB" id="4WDB">
    <property type="method" value="X-ray"/>
    <property type="resolution" value="1.60 A"/>
    <property type="chains" value="A=179-398"/>
</dbReference>
<dbReference type="PDB" id="4WDD">
    <property type="method" value="X-ray"/>
    <property type="resolution" value="2.10 A"/>
    <property type="chains" value="A=179-398"/>
</dbReference>
<dbReference type="PDB" id="4WDE">
    <property type="method" value="X-ray"/>
    <property type="resolution" value="2.40 A"/>
    <property type="chains" value="A/B=179-398"/>
</dbReference>
<dbReference type="PDB" id="4WDF">
    <property type="method" value="X-ray"/>
    <property type="resolution" value="2.00 A"/>
    <property type="chains" value="A=179-398"/>
</dbReference>
<dbReference type="PDB" id="4WDG">
    <property type="method" value="X-ray"/>
    <property type="resolution" value="2.05 A"/>
    <property type="chains" value="A=179-398"/>
</dbReference>
<dbReference type="PDB" id="4WDH">
    <property type="method" value="X-ray"/>
    <property type="resolution" value="1.90 A"/>
    <property type="chains" value="A=179-398"/>
</dbReference>
<dbReference type="PDB" id="4WEX">
    <property type="method" value="X-ray"/>
    <property type="resolution" value="2.10 A"/>
    <property type="chains" value="A=179-398"/>
</dbReference>
<dbReference type="PDB" id="4WFR">
    <property type="method" value="X-ray"/>
    <property type="resolution" value="2.00 A"/>
    <property type="chains" value="A=179-398"/>
</dbReference>
<dbReference type="PDB" id="5AE0">
    <property type="method" value="X-ray"/>
    <property type="resolution" value="1.04 A"/>
    <property type="chains" value="A=179-398"/>
</dbReference>
<dbReference type="PDB" id="7QZK">
    <property type="method" value="X-ray"/>
    <property type="resolution" value="1.66 A"/>
    <property type="chains" value="A=179-398"/>
</dbReference>
<dbReference type="PDB" id="7QZS">
    <property type="method" value="X-ray"/>
    <property type="resolution" value="1.80 A"/>
    <property type="chains" value="A=179-398"/>
</dbReference>
<dbReference type="PDB" id="9ERT">
    <property type="method" value="X-ray"/>
    <property type="resolution" value="2.75 A"/>
    <property type="chains" value="A=179-398"/>
</dbReference>
<dbReference type="PDB" id="9ERU">
    <property type="method" value="X-ray"/>
    <property type="resolution" value="2.50 A"/>
    <property type="chains" value="A/B/D/F=179-398"/>
</dbReference>
<dbReference type="PDB" id="9ERW">
    <property type="method" value="X-ray"/>
    <property type="resolution" value="1.73 A"/>
    <property type="chains" value="B=179-398"/>
</dbReference>
<dbReference type="PDB" id="9ETJ">
    <property type="method" value="X-ray"/>
    <property type="resolution" value="2.55 A"/>
    <property type="chains" value="A/B/E/G=179-398"/>
</dbReference>
<dbReference type="PDB" id="9ETL">
    <property type="method" value="X-ray"/>
    <property type="resolution" value="1.50 A"/>
    <property type="chains" value="A/B=179-398"/>
</dbReference>
<dbReference type="PDBsum" id="2XMI"/>
<dbReference type="PDBsum" id="2Y1P"/>
<dbReference type="PDBsum" id="2Y3X"/>
<dbReference type="PDBsum" id="2YDB"/>
<dbReference type="PDBsum" id="2YDC"/>
<dbReference type="PDBsum" id="2YDD"/>
<dbReference type="PDBsum" id="2YOZ"/>
<dbReference type="PDBsum" id="2YP0"/>
<dbReference type="PDBsum" id="2YPC"/>
<dbReference type="PDBsum" id="2YPE"/>
<dbReference type="PDBsum" id="2YPH"/>
<dbReference type="PDBsum" id="2YQ9"/>
<dbReference type="PDBsum" id="3ZBR"/>
<dbReference type="PDBsum" id="3ZBS"/>
<dbReference type="PDBsum" id="3ZBZ"/>
<dbReference type="PDBsum" id="4WBI"/>
<dbReference type="PDBsum" id="4WBL"/>
<dbReference type="PDBsum" id="4WC9"/>
<dbReference type="PDBsum" id="4WCA"/>
<dbReference type="PDBsum" id="4WCB"/>
<dbReference type="PDBsum" id="4WCC"/>
<dbReference type="PDBsum" id="4WDA"/>
<dbReference type="PDBsum" id="4WDB"/>
<dbReference type="PDBsum" id="4WDD"/>
<dbReference type="PDBsum" id="4WDE"/>
<dbReference type="PDBsum" id="4WDF"/>
<dbReference type="PDBsum" id="4WDG"/>
<dbReference type="PDBsum" id="4WDH"/>
<dbReference type="PDBsum" id="4WEX"/>
<dbReference type="PDBsum" id="4WFR"/>
<dbReference type="PDBsum" id="5AE0"/>
<dbReference type="PDBsum" id="7QZK"/>
<dbReference type="PDBsum" id="7QZS"/>
<dbReference type="PDBsum" id="9ERT"/>
<dbReference type="PDBsum" id="9ERU"/>
<dbReference type="PDBsum" id="9ERW"/>
<dbReference type="PDBsum" id="9ETJ"/>
<dbReference type="PDBsum" id="9ETL"/>
<dbReference type="SMR" id="P16330"/>
<dbReference type="BioGRID" id="198792">
    <property type="interactions" value="20"/>
</dbReference>
<dbReference type="FunCoup" id="P16330">
    <property type="interactions" value="699"/>
</dbReference>
<dbReference type="IntAct" id="P16330">
    <property type="interactions" value="16"/>
</dbReference>
<dbReference type="MINT" id="P16330"/>
<dbReference type="STRING" id="10090.ENSMUSP00000099409"/>
<dbReference type="GlyGen" id="P16330">
    <property type="glycosylation" value="2 sites, 1 N-linked glycan (1 site), 1 O-linked glycan (1 site)"/>
</dbReference>
<dbReference type="iPTMnet" id="P16330"/>
<dbReference type="PhosphoSitePlus" id="P16330"/>
<dbReference type="SwissPalm" id="P16330"/>
<dbReference type="jPOST" id="P16330"/>
<dbReference type="PaxDb" id="10090-ENSMUSP00000099409"/>
<dbReference type="PeptideAtlas" id="P16330"/>
<dbReference type="ProteomicsDB" id="283390">
    <molecule id="P16330-1"/>
</dbReference>
<dbReference type="ProteomicsDB" id="283391">
    <molecule id="P16330-2"/>
</dbReference>
<dbReference type="Pumba" id="P16330"/>
<dbReference type="Antibodypedia" id="3629">
    <property type="antibodies" value="551 antibodies from 44 providers"/>
</dbReference>
<dbReference type="DNASU" id="12799"/>
<dbReference type="Ensembl" id="ENSMUST00000103120.5">
    <molecule id="P16330-1"/>
    <property type="protein sequence ID" value="ENSMUSP00000099409.5"/>
    <property type="gene ID" value="ENSMUSG00000006782.17"/>
</dbReference>
<dbReference type="GeneID" id="12799"/>
<dbReference type="KEGG" id="mmu:12799"/>
<dbReference type="UCSC" id="uc007llo.2">
    <molecule id="P16330-1"/>
    <property type="organism name" value="mouse"/>
</dbReference>
<dbReference type="AGR" id="MGI:88437"/>
<dbReference type="CTD" id="1267"/>
<dbReference type="MGI" id="MGI:88437">
    <property type="gene designation" value="Cnp"/>
</dbReference>
<dbReference type="VEuPathDB" id="HostDB:ENSMUSG00000006782"/>
<dbReference type="eggNOG" id="KOG2401">
    <property type="taxonomic scope" value="Eukaryota"/>
</dbReference>
<dbReference type="GeneTree" id="ENSGT00510000048410"/>
<dbReference type="HOGENOM" id="CLU_039178_0_0_1"/>
<dbReference type="InParanoid" id="P16330"/>
<dbReference type="OMA" id="DAYKINP"/>
<dbReference type="OrthoDB" id="3231855at2759"/>
<dbReference type="PhylomeDB" id="P16330"/>
<dbReference type="TreeFam" id="TF332157"/>
<dbReference type="BRENDA" id="3.1.4.37">
    <property type="organism ID" value="3474"/>
</dbReference>
<dbReference type="BioGRID-ORCS" id="12799">
    <property type="hits" value="5 hits in 78 CRISPR screens"/>
</dbReference>
<dbReference type="CD-CODE" id="CE726F99">
    <property type="entry name" value="Postsynaptic density"/>
</dbReference>
<dbReference type="ChiTaRS" id="Cnp">
    <property type="organism name" value="mouse"/>
</dbReference>
<dbReference type="EvolutionaryTrace" id="P16330"/>
<dbReference type="PRO" id="PR:P16330"/>
<dbReference type="Proteomes" id="UP000000589">
    <property type="component" value="Chromosome 11"/>
</dbReference>
<dbReference type="RNAct" id="P16330">
    <property type="molecule type" value="protein"/>
</dbReference>
<dbReference type="Bgee" id="ENSMUSG00000006782">
    <property type="expression patterns" value="Expressed in cranial nerve II and 246 other cell types or tissues"/>
</dbReference>
<dbReference type="ExpressionAtlas" id="P16330">
    <property type="expression patterns" value="baseline and differential"/>
</dbReference>
<dbReference type="GO" id="GO:0005737">
    <property type="term" value="C:cytoplasm"/>
    <property type="evidence" value="ECO:0000314"/>
    <property type="project" value="MGI"/>
</dbReference>
<dbReference type="GO" id="GO:0005615">
    <property type="term" value="C:extracellular space"/>
    <property type="evidence" value="ECO:0007669"/>
    <property type="project" value="Ensembl"/>
</dbReference>
<dbReference type="GO" id="GO:0042470">
    <property type="term" value="C:melanosome"/>
    <property type="evidence" value="ECO:0007669"/>
    <property type="project" value="UniProtKB-SubCell"/>
</dbReference>
<dbReference type="GO" id="GO:0016020">
    <property type="term" value="C:membrane"/>
    <property type="evidence" value="ECO:0000314"/>
    <property type="project" value="MGI"/>
</dbReference>
<dbReference type="GO" id="GO:0043209">
    <property type="term" value="C:myelin sheath"/>
    <property type="evidence" value="ECO:0000314"/>
    <property type="project" value="MGI"/>
</dbReference>
<dbReference type="GO" id="GO:0004113">
    <property type="term" value="F:2',3'-cyclic-nucleotide 3'-phosphodiesterase activity"/>
    <property type="evidence" value="ECO:0000314"/>
    <property type="project" value="MGI"/>
</dbReference>
<dbReference type="GO" id="GO:0003723">
    <property type="term" value="F:RNA binding"/>
    <property type="evidence" value="ECO:0007669"/>
    <property type="project" value="UniProtKB-KW"/>
</dbReference>
<dbReference type="GO" id="GO:0008344">
    <property type="term" value="P:adult locomotory behavior"/>
    <property type="evidence" value="ECO:0000315"/>
    <property type="project" value="MGI"/>
</dbReference>
<dbReference type="GO" id="GO:0007409">
    <property type="term" value="P:axonogenesis"/>
    <property type="evidence" value="ECO:0000315"/>
    <property type="project" value="MGI"/>
</dbReference>
<dbReference type="GO" id="GO:0009214">
    <property type="term" value="P:cyclic nucleotide catabolic process"/>
    <property type="evidence" value="ECO:0007669"/>
    <property type="project" value="InterPro"/>
</dbReference>
<dbReference type="GO" id="GO:0048709">
    <property type="term" value="P:oligodendrocyte differentiation"/>
    <property type="evidence" value="ECO:0000315"/>
    <property type="project" value="MGI"/>
</dbReference>
<dbReference type="GO" id="GO:0009636">
    <property type="term" value="P:response to toxic substance"/>
    <property type="evidence" value="ECO:0000314"/>
    <property type="project" value="MGI"/>
</dbReference>
<dbReference type="FunFam" id="3.40.50.300:FF:000795">
    <property type="entry name" value="Tetratricopeptide repeat protein 25"/>
    <property type="match status" value="1"/>
</dbReference>
<dbReference type="FunFam" id="3.90.1740.10:FF:000001">
    <property type="entry name" value="Tetratricopeptide repeat protein 25"/>
    <property type="match status" value="1"/>
</dbReference>
<dbReference type="Gene3D" id="3.90.1740.10">
    <property type="entry name" value="2',3'-cyclic nucleotide 3'-phosphodiesterase superfamily"/>
    <property type="match status" value="1"/>
</dbReference>
<dbReference type="Gene3D" id="3.40.50.300">
    <property type="entry name" value="P-loop containing nucleotide triphosphate hydrolases"/>
    <property type="match status" value="1"/>
</dbReference>
<dbReference type="InterPro" id="IPR008431">
    <property type="entry name" value="CNPase"/>
</dbReference>
<dbReference type="InterPro" id="IPR047325">
    <property type="entry name" value="CNPase_cat"/>
</dbReference>
<dbReference type="InterPro" id="IPR009097">
    <property type="entry name" value="Cyclic_Pdiesterase"/>
</dbReference>
<dbReference type="InterPro" id="IPR027417">
    <property type="entry name" value="P-loop_NTPase"/>
</dbReference>
<dbReference type="PANTHER" id="PTHR10156">
    <property type="entry name" value="2',3'-CYCLIC-NUCLEOTIDE 3'-PHOSPHODIESTERASE"/>
    <property type="match status" value="1"/>
</dbReference>
<dbReference type="PANTHER" id="PTHR10156:SF0">
    <property type="entry name" value="2',3'-CYCLIC-NUCLEOTIDE 3'-PHOSPHODIESTERASE"/>
    <property type="match status" value="1"/>
</dbReference>
<dbReference type="Pfam" id="PF13671">
    <property type="entry name" value="AAA_33"/>
    <property type="match status" value="1"/>
</dbReference>
<dbReference type="Pfam" id="PF05881">
    <property type="entry name" value="CNPase"/>
    <property type="match status" value="1"/>
</dbReference>
<dbReference type="PIRSF" id="PIRSF000970">
    <property type="entry name" value="CNPase"/>
    <property type="match status" value="1"/>
</dbReference>
<dbReference type="SUPFAM" id="SSF55144">
    <property type="entry name" value="LigT-like"/>
    <property type="match status" value="1"/>
</dbReference>
<dbReference type="SUPFAM" id="SSF52540">
    <property type="entry name" value="P-loop containing nucleoside triphosphate hydrolases"/>
    <property type="match status" value="1"/>
</dbReference>
<accession>P16330</accession>
<accession>Q61424</accession>
<accession>Q8C7C9</accession>
<accession>Q91V42</accession>
<accession>Q923F3</accession>
<gene>
    <name evidence="10" type="primary">Cnp</name>
    <name type="synonym">Cnp1</name>
</gene>
<keyword id="KW-0002">3D-structure</keyword>
<keyword id="KW-0025">Alternative splicing</keyword>
<keyword id="KW-0903">Direct protein sequencing</keyword>
<keyword id="KW-0378">Hydrolase</keyword>
<keyword id="KW-0449">Lipoprotein</keyword>
<keyword id="KW-0472">Membrane</keyword>
<keyword id="KW-0488">Methylation</keyword>
<keyword id="KW-0597">Phosphoprotein</keyword>
<keyword id="KW-0636">Prenylation</keyword>
<keyword id="KW-1185">Reference proteome</keyword>
<keyword id="KW-0694">RNA-binding</keyword>
<reference key="1">
    <citation type="journal article" date="1989" name="Biochem. Biophys. Res. Commun.">
        <title>Structure of mouse 2',3'-cyclic-nucleotide 3'-phosphodiesterase gene.</title>
        <authorList>
            <person name="Monoh K."/>
            <person name="Kurihara T."/>
            <person name="Sakimura K."/>
            <person name="Takahashi Y."/>
        </authorList>
    </citation>
    <scope>NUCLEOTIDE SEQUENCE [GENOMIC DNA] (ISOFORM CNPI)</scope>
    <source>
        <strain>DBA</strain>
    </source>
</reference>
<reference key="2">
    <citation type="journal article" date="1990" name="Biochem. Biophys. Res. Commun.">
        <title>Alternative splicing of mouse brain 2',3'-cyclic-nucleotide 3'-phosphodiesterase mRNA.</title>
        <authorList>
            <person name="Kurihara T."/>
            <person name="Monoh K."/>
            <person name="Sakimura K."/>
            <person name="Takahashi Y."/>
        </authorList>
    </citation>
    <scope>NUCLEOTIDE SEQUENCE [GENOMIC DNA / MRNA] (ISOFORMS CNPI AND CNPII)</scope>
    <source>
        <strain>DBA</strain>
        <tissue>Brain</tissue>
    </source>
</reference>
<reference key="3">
    <citation type="journal article" date="2001" name="Mamm. Genome">
        <title>High-throughput sequence identification of gene coding variants within alcohol-related QTLs.</title>
        <authorList>
            <person name="Ehringer M.A."/>
            <person name="Thompson J."/>
            <person name="Conroy O."/>
            <person name="Xu Y."/>
            <person name="Yang F."/>
            <person name="Canniff J."/>
            <person name="Beeson M."/>
            <person name="Gordon L."/>
            <person name="Bennett B."/>
            <person name="Johnson T.E."/>
            <person name="Sikela J.M."/>
        </authorList>
    </citation>
    <scope>NUCLEOTIDE SEQUENCE [MRNA] (ISOFORM CNPI)</scope>
    <source>
        <strain>ILS</strain>
        <strain>ISS</strain>
    </source>
</reference>
<reference key="4">
    <citation type="journal article" date="2004" name="Genome Res.">
        <title>The status, quality, and expansion of the NIH full-length cDNA project: the Mammalian Gene Collection (MGC).</title>
        <authorList>
            <consortium name="The MGC Project Team"/>
        </authorList>
    </citation>
    <scope>NUCLEOTIDE SEQUENCE [LARGE SCALE MRNA] (ISOFORM CNPII)</scope>
    <source>
        <strain>FVB/N</strain>
        <tissue>Mammary tumor</tissue>
    </source>
</reference>
<reference key="5">
    <citation type="journal article" date="2005" name="Science">
        <title>The transcriptional landscape of the mammalian genome.</title>
        <authorList>
            <person name="Carninci P."/>
            <person name="Kasukawa T."/>
            <person name="Katayama S."/>
            <person name="Gough J."/>
            <person name="Frith M.C."/>
            <person name="Maeda N."/>
            <person name="Oyama R."/>
            <person name="Ravasi T."/>
            <person name="Lenhard B."/>
            <person name="Wells C."/>
            <person name="Kodzius R."/>
            <person name="Shimokawa K."/>
            <person name="Bajic V.B."/>
            <person name="Brenner S.E."/>
            <person name="Batalov S."/>
            <person name="Forrest A.R."/>
            <person name="Zavolan M."/>
            <person name="Davis M.J."/>
            <person name="Wilming L.G."/>
            <person name="Aidinis V."/>
            <person name="Allen J.E."/>
            <person name="Ambesi-Impiombato A."/>
            <person name="Apweiler R."/>
            <person name="Aturaliya R.N."/>
            <person name="Bailey T.L."/>
            <person name="Bansal M."/>
            <person name="Baxter L."/>
            <person name="Beisel K.W."/>
            <person name="Bersano T."/>
            <person name="Bono H."/>
            <person name="Chalk A.M."/>
            <person name="Chiu K.P."/>
            <person name="Choudhary V."/>
            <person name="Christoffels A."/>
            <person name="Clutterbuck D.R."/>
            <person name="Crowe M.L."/>
            <person name="Dalla E."/>
            <person name="Dalrymple B.P."/>
            <person name="de Bono B."/>
            <person name="Della Gatta G."/>
            <person name="di Bernardo D."/>
            <person name="Down T."/>
            <person name="Engstrom P."/>
            <person name="Fagiolini M."/>
            <person name="Faulkner G."/>
            <person name="Fletcher C.F."/>
            <person name="Fukushima T."/>
            <person name="Furuno M."/>
            <person name="Futaki S."/>
            <person name="Gariboldi M."/>
            <person name="Georgii-Hemming P."/>
            <person name="Gingeras T.R."/>
            <person name="Gojobori T."/>
            <person name="Green R.E."/>
            <person name="Gustincich S."/>
            <person name="Harbers M."/>
            <person name="Hayashi Y."/>
            <person name="Hensch T.K."/>
            <person name="Hirokawa N."/>
            <person name="Hill D."/>
            <person name="Huminiecki L."/>
            <person name="Iacono M."/>
            <person name="Ikeo K."/>
            <person name="Iwama A."/>
            <person name="Ishikawa T."/>
            <person name="Jakt M."/>
            <person name="Kanapin A."/>
            <person name="Katoh M."/>
            <person name="Kawasawa Y."/>
            <person name="Kelso J."/>
            <person name="Kitamura H."/>
            <person name="Kitano H."/>
            <person name="Kollias G."/>
            <person name="Krishnan S.P."/>
            <person name="Kruger A."/>
            <person name="Kummerfeld S.K."/>
            <person name="Kurochkin I.V."/>
            <person name="Lareau L.F."/>
            <person name="Lazarevic D."/>
            <person name="Lipovich L."/>
            <person name="Liu J."/>
            <person name="Liuni S."/>
            <person name="McWilliam S."/>
            <person name="Madan Babu M."/>
            <person name="Madera M."/>
            <person name="Marchionni L."/>
            <person name="Matsuda H."/>
            <person name="Matsuzawa S."/>
            <person name="Miki H."/>
            <person name="Mignone F."/>
            <person name="Miyake S."/>
            <person name="Morris K."/>
            <person name="Mottagui-Tabar S."/>
            <person name="Mulder N."/>
            <person name="Nakano N."/>
            <person name="Nakauchi H."/>
            <person name="Ng P."/>
            <person name="Nilsson R."/>
            <person name="Nishiguchi S."/>
            <person name="Nishikawa S."/>
            <person name="Nori F."/>
            <person name="Ohara O."/>
            <person name="Okazaki Y."/>
            <person name="Orlando V."/>
            <person name="Pang K.C."/>
            <person name="Pavan W.J."/>
            <person name="Pavesi G."/>
            <person name="Pesole G."/>
            <person name="Petrovsky N."/>
            <person name="Piazza S."/>
            <person name="Reed J."/>
            <person name="Reid J.F."/>
            <person name="Ring B.Z."/>
            <person name="Ringwald M."/>
            <person name="Rost B."/>
            <person name="Ruan Y."/>
            <person name="Salzberg S.L."/>
            <person name="Sandelin A."/>
            <person name="Schneider C."/>
            <person name="Schoenbach C."/>
            <person name="Sekiguchi K."/>
            <person name="Semple C.A."/>
            <person name="Seno S."/>
            <person name="Sessa L."/>
            <person name="Sheng Y."/>
            <person name="Shibata Y."/>
            <person name="Shimada H."/>
            <person name="Shimada K."/>
            <person name="Silva D."/>
            <person name="Sinclair B."/>
            <person name="Sperling S."/>
            <person name="Stupka E."/>
            <person name="Sugiura K."/>
            <person name="Sultana R."/>
            <person name="Takenaka Y."/>
            <person name="Taki K."/>
            <person name="Tammoja K."/>
            <person name="Tan S.L."/>
            <person name="Tang S."/>
            <person name="Taylor M.S."/>
            <person name="Tegner J."/>
            <person name="Teichmann S.A."/>
            <person name="Ueda H.R."/>
            <person name="van Nimwegen E."/>
            <person name="Verardo R."/>
            <person name="Wei C.L."/>
            <person name="Yagi K."/>
            <person name="Yamanishi H."/>
            <person name="Zabarovsky E."/>
            <person name="Zhu S."/>
            <person name="Zimmer A."/>
            <person name="Hide W."/>
            <person name="Bult C."/>
            <person name="Grimmond S.M."/>
            <person name="Teasdale R.D."/>
            <person name="Liu E.T."/>
            <person name="Brusic V."/>
            <person name="Quackenbush J."/>
            <person name="Wahlestedt C."/>
            <person name="Mattick J.S."/>
            <person name="Hume D.A."/>
            <person name="Kai C."/>
            <person name="Sasaki D."/>
            <person name="Tomaru Y."/>
            <person name="Fukuda S."/>
            <person name="Kanamori-Katayama M."/>
            <person name="Suzuki M."/>
            <person name="Aoki J."/>
            <person name="Arakawa T."/>
            <person name="Iida J."/>
            <person name="Imamura K."/>
            <person name="Itoh M."/>
            <person name="Kato T."/>
            <person name="Kawaji H."/>
            <person name="Kawagashira N."/>
            <person name="Kawashima T."/>
            <person name="Kojima M."/>
            <person name="Kondo S."/>
            <person name="Konno H."/>
            <person name="Nakano K."/>
            <person name="Ninomiya N."/>
            <person name="Nishio T."/>
            <person name="Okada M."/>
            <person name="Plessy C."/>
            <person name="Shibata K."/>
            <person name="Shiraki T."/>
            <person name="Suzuki S."/>
            <person name="Tagami M."/>
            <person name="Waki K."/>
            <person name="Watahiki A."/>
            <person name="Okamura-Oho Y."/>
            <person name="Suzuki H."/>
            <person name="Kawai J."/>
            <person name="Hayashizaki Y."/>
        </authorList>
    </citation>
    <scope>NUCLEOTIDE SEQUENCE [LARGE SCALE MRNA] OF 1-418 (ISOFORM CNPII)</scope>
    <source>
        <strain>C57BL/6J</strain>
        <tissue>Thymus</tissue>
    </source>
</reference>
<reference key="6">
    <citation type="submission" date="2009-01" db="UniProtKB">
        <authorList>
            <person name="Lubec G."/>
            <person name="Kang S.U."/>
            <person name="Sunyer B."/>
            <person name="Chen W.-Q."/>
        </authorList>
    </citation>
    <scope>PROTEIN SEQUENCE OF 94-101; 103-112; 117-127; 130-150; 164-174; 183-195; 203-216; 235-243; 261-274; 276-293; 356-368; 379-385 AND 391-399</scope>
    <source>
        <strain>C57BL/6J</strain>
        <strain>OF1</strain>
        <tissue>Brain</tissue>
        <tissue>Hippocampus</tissue>
    </source>
</reference>
<reference key="7">
    <citation type="journal article" date="2008" name="Biochemistry">
        <title>Structures and micelle locations of the nonlipidated and lipidated C-terminal membrane anchor of 2',3'-cyclic nucleotide-3'-phosphodiesterase.</title>
        <authorList>
            <person name="Esposito C."/>
            <person name="Scrima M."/>
            <person name="Carotenuto A."/>
            <person name="Tedeschi A."/>
            <person name="Rovero P."/>
            <person name="D'Errico G."/>
            <person name="Malfitano A.M."/>
            <person name="Bifulco M."/>
            <person name="D'Ursi A.M."/>
        </authorList>
    </citation>
    <scope>ISOPRENYLATION AT CYS-417</scope>
    <scope>SUBCELLULAR LOCATION</scope>
</reference>
<reference key="8">
    <citation type="journal article" date="2008" name="J. Proteome Res.">
        <title>Large-scale identification and evolution indexing of tyrosine phosphorylation sites from murine brain.</title>
        <authorList>
            <person name="Ballif B.A."/>
            <person name="Carey G.R."/>
            <person name="Sunyaev S.R."/>
            <person name="Gygi S.P."/>
        </authorList>
    </citation>
    <scope>PHOSPHORYLATION [LARGE SCALE ANALYSIS] AT TYR-110</scope>
    <scope>IDENTIFICATION BY MASS SPECTROMETRY [LARGE SCALE ANALYSIS]</scope>
    <source>
        <tissue>Brain</tissue>
    </source>
</reference>
<reference key="9">
    <citation type="journal article" date="2010" name="Cell">
        <title>A tissue-specific atlas of mouse protein phosphorylation and expression.</title>
        <authorList>
            <person name="Huttlin E.L."/>
            <person name="Jedrychowski M.P."/>
            <person name="Elias J.E."/>
            <person name="Goswami T."/>
            <person name="Rad R."/>
            <person name="Beausoleil S.A."/>
            <person name="Villen J."/>
            <person name="Haas W."/>
            <person name="Sowa M.E."/>
            <person name="Gygi S.P."/>
        </authorList>
    </citation>
    <scope>PHOSPHORYLATION [LARGE SCALE ANALYSIS] AT SER-169</scope>
    <scope>IDENTIFICATION BY MASS SPECTROMETRY [LARGE SCALE ANALYSIS]</scope>
    <source>
        <tissue>Brain</tissue>
        <tissue>Brown adipose tissue</tissue>
        <tissue>Heart</tissue>
        <tissue>Kidney</tissue>
        <tissue>Liver</tissue>
        <tissue>Lung</tissue>
        <tissue>Pancreas</tissue>
        <tissue>Spleen</tissue>
        <tissue>Testis</tissue>
    </source>
</reference>
<reference key="10">
    <citation type="journal article" date="2012" name="PLoS ONE">
        <title>Myelin 2',3'-cyclic nucleotide 3'-phosphodiesterase: active-site ligand binding and molecular conformation.</title>
        <authorList>
            <person name="Myllykoski M."/>
            <person name="Raasakka A."/>
            <person name="Han H."/>
            <person name="Kursula P."/>
        </authorList>
    </citation>
    <scope>X-RAY CRYSTALLOGRAPHY (1.74 ANGSTROMS) OF 179-398</scope>
    <scope>ACTIVE SITE</scope>
    <scope>SUBSTRATE-BINDING SITES</scope>
    <scope>RNA-BINDING</scope>
    <scope>FUNCTION</scope>
    <scope>SUBUNIT</scope>
</reference>